<protein>
    <recommendedName>
        <fullName evidence="1">3-methyl-2-oxobutanoate hydroxymethyltransferase</fullName>
        <ecNumber evidence="1">2.1.2.11</ecNumber>
    </recommendedName>
    <alternativeName>
        <fullName evidence="1">Ketopantoate hydroxymethyltransferase</fullName>
        <shortName evidence="1">KPHMT</shortName>
    </alternativeName>
</protein>
<keyword id="KW-0963">Cytoplasm</keyword>
<keyword id="KW-0460">Magnesium</keyword>
<keyword id="KW-0479">Metal-binding</keyword>
<keyword id="KW-0566">Pantothenate biosynthesis</keyword>
<keyword id="KW-1185">Reference proteome</keyword>
<keyword id="KW-0808">Transferase</keyword>
<evidence type="ECO:0000255" key="1">
    <source>
        <dbReference type="HAMAP-Rule" id="MF_00156"/>
    </source>
</evidence>
<evidence type="ECO:0000256" key="2">
    <source>
        <dbReference type="SAM" id="MobiDB-lite"/>
    </source>
</evidence>
<accession>B2HHM7</accession>
<name>PANB_MYCMM</name>
<organism>
    <name type="scientific">Mycobacterium marinum (strain ATCC BAA-535 / M)</name>
    <dbReference type="NCBI Taxonomy" id="216594"/>
    <lineage>
        <taxon>Bacteria</taxon>
        <taxon>Bacillati</taxon>
        <taxon>Actinomycetota</taxon>
        <taxon>Actinomycetes</taxon>
        <taxon>Mycobacteriales</taxon>
        <taxon>Mycobacteriaceae</taxon>
        <taxon>Mycobacterium</taxon>
        <taxon>Mycobacterium ulcerans group</taxon>
    </lineage>
</organism>
<reference key="1">
    <citation type="journal article" date="2008" name="Genome Res.">
        <title>Insights from the complete genome sequence of Mycobacterium marinum on the evolution of Mycobacterium tuberculosis.</title>
        <authorList>
            <person name="Stinear T.P."/>
            <person name="Seemann T."/>
            <person name="Harrison P.F."/>
            <person name="Jenkin G.A."/>
            <person name="Davies J.K."/>
            <person name="Johnson P.D."/>
            <person name="Abdellah Z."/>
            <person name="Arrowsmith C."/>
            <person name="Chillingworth T."/>
            <person name="Churcher C."/>
            <person name="Clarke K."/>
            <person name="Cronin A."/>
            <person name="Davis P."/>
            <person name="Goodhead I."/>
            <person name="Holroyd N."/>
            <person name="Jagels K."/>
            <person name="Lord A."/>
            <person name="Moule S."/>
            <person name="Mungall K."/>
            <person name="Norbertczak H."/>
            <person name="Quail M.A."/>
            <person name="Rabbinowitsch E."/>
            <person name="Walker D."/>
            <person name="White B."/>
            <person name="Whitehead S."/>
            <person name="Small P.L."/>
            <person name="Brosch R."/>
            <person name="Ramakrishnan L."/>
            <person name="Fischbach M.A."/>
            <person name="Parkhill J."/>
            <person name="Cole S.T."/>
        </authorList>
    </citation>
    <scope>NUCLEOTIDE SEQUENCE [LARGE SCALE GENOMIC DNA]</scope>
    <source>
        <strain>ATCC BAA-535 / M</strain>
    </source>
</reference>
<proteinExistence type="inferred from homology"/>
<sequence length="297" mass="30907">MSEQISEQSEQNVYGASSPVPAGESSPSAASAPRTKVRTHHLQKWKAEGHKWAMLTVYDYSTARAFDDAGIPVLLVGDSAANVVYGYDTTVPISIDELIPLVRGVVRGAPHALVVADLPFGSYESGPSAALAAATRFMKEAGAHAVKLEGGERVAEQIACLTAAGIPVMAHIGFTPQSVNTLGGFRVQGRGDAAEQTIADAIAVAEAGAFSVVMEMVPAELATQITGKLTIPTIGIGAGPSCDGQVLVWQDMAGLSSGKAPRFVKRYADVGGELRRAAVQYAQDVAGGVFPAEEHCF</sequence>
<feature type="chain" id="PRO_1000123386" description="3-methyl-2-oxobutanoate hydroxymethyltransferase">
    <location>
        <begin position="1"/>
        <end position="297"/>
    </location>
</feature>
<feature type="region of interest" description="Disordered" evidence="2">
    <location>
        <begin position="1"/>
        <end position="40"/>
    </location>
</feature>
<feature type="compositionally biased region" description="Polar residues" evidence="2">
    <location>
        <begin position="1"/>
        <end position="15"/>
    </location>
</feature>
<feature type="compositionally biased region" description="Low complexity" evidence="2">
    <location>
        <begin position="16"/>
        <end position="33"/>
    </location>
</feature>
<feature type="active site" description="Proton acceptor" evidence="1">
    <location>
        <position position="215"/>
    </location>
</feature>
<feature type="binding site" evidence="1">
    <location>
        <begin position="78"/>
        <end position="79"/>
    </location>
    <ligand>
        <name>3-methyl-2-oxobutanoate</name>
        <dbReference type="ChEBI" id="CHEBI:11851"/>
    </ligand>
</feature>
<feature type="binding site" evidence="1">
    <location>
        <position position="78"/>
    </location>
    <ligand>
        <name>Mg(2+)</name>
        <dbReference type="ChEBI" id="CHEBI:18420"/>
    </ligand>
</feature>
<feature type="binding site" evidence="1">
    <location>
        <position position="117"/>
    </location>
    <ligand>
        <name>3-methyl-2-oxobutanoate</name>
        <dbReference type="ChEBI" id="CHEBI:11851"/>
    </ligand>
</feature>
<feature type="binding site" evidence="1">
    <location>
        <position position="117"/>
    </location>
    <ligand>
        <name>Mg(2+)</name>
        <dbReference type="ChEBI" id="CHEBI:18420"/>
    </ligand>
</feature>
<feature type="binding site" evidence="1">
    <location>
        <position position="147"/>
    </location>
    <ligand>
        <name>3-methyl-2-oxobutanoate</name>
        <dbReference type="ChEBI" id="CHEBI:11851"/>
    </ligand>
</feature>
<feature type="binding site" evidence="1">
    <location>
        <position position="149"/>
    </location>
    <ligand>
        <name>Mg(2+)</name>
        <dbReference type="ChEBI" id="CHEBI:18420"/>
    </ligand>
</feature>
<comment type="function">
    <text evidence="1">Catalyzes the reversible reaction in which hydroxymethyl group from 5,10-methylenetetrahydrofolate is transferred onto alpha-ketoisovalerate to form ketopantoate.</text>
</comment>
<comment type="catalytic activity">
    <reaction evidence="1">
        <text>3-methyl-2-oxobutanoate + (6R)-5,10-methylene-5,6,7,8-tetrahydrofolate + H2O = 2-dehydropantoate + (6S)-5,6,7,8-tetrahydrofolate</text>
        <dbReference type="Rhea" id="RHEA:11824"/>
        <dbReference type="ChEBI" id="CHEBI:11561"/>
        <dbReference type="ChEBI" id="CHEBI:11851"/>
        <dbReference type="ChEBI" id="CHEBI:15377"/>
        <dbReference type="ChEBI" id="CHEBI:15636"/>
        <dbReference type="ChEBI" id="CHEBI:57453"/>
        <dbReference type="EC" id="2.1.2.11"/>
    </reaction>
</comment>
<comment type="cofactor">
    <cofactor evidence="1">
        <name>Mg(2+)</name>
        <dbReference type="ChEBI" id="CHEBI:18420"/>
    </cofactor>
    <text evidence="1">Binds 1 Mg(2+) ion per subunit.</text>
</comment>
<comment type="pathway">
    <text evidence="1">Cofactor biosynthesis; (R)-pantothenate biosynthesis; (R)-pantoate from 3-methyl-2-oxobutanoate: step 1/2.</text>
</comment>
<comment type="subunit">
    <text evidence="1">Homodecamer; pentamer of dimers.</text>
</comment>
<comment type="subcellular location">
    <subcellularLocation>
        <location evidence="1">Cytoplasm</location>
    </subcellularLocation>
</comment>
<comment type="similarity">
    <text evidence="1">Belongs to the PanB family.</text>
</comment>
<gene>
    <name evidence="1" type="primary">panB</name>
    <name type="ordered locus">MMAR_3299</name>
</gene>
<dbReference type="EC" id="2.1.2.11" evidence="1"/>
<dbReference type="EMBL" id="CP000854">
    <property type="protein sequence ID" value="ACC41725.1"/>
    <property type="molecule type" value="Genomic_DNA"/>
</dbReference>
<dbReference type="RefSeq" id="WP_012394952.1">
    <property type="nucleotide sequence ID" value="NC_010612.1"/>
</dbReference>
<dbReference type="SMR" id="B2HHM7"/>
<dbReference type="STRING" id="216594.MMAR_3299"/>
<dbReference type="KEGG" id="mmi:MMAR_3299"/>
<dbReference type="eggNOG" id="COG0413">
    <property type="taxonomic scope" value="Bacteria"/>
</dbReference>
<dbReference type="HOGENOM" id="CLU_036645_1_0_11"/>
<dbReference type="UniPathway" id="UPA00028">
    <property type="reaction ID" value="UER00003"/>
</dbReference>
<dbReference type="Proteomes" id="UP000001190">
    <property type="component" value="Chromosome"/>
</dbReference>
<dbReference type="GO" id="GO:0005737">
    <property type="term" value="C:cytoplasm"/>
    <property type="evidence" value="ECO:0007669"/>
    <property type="project" value="UniProtKB-SubCell"/>
</dbReference>
<dbReference type="GO" id="GO:0003864">
    <property type="term" value="F:3-methyl-2-oxobutanoate hydroxymethyltransferase activity"/>
    <property type="evidence" value="ECO:0007669"/>
    <property type="project" value="UniProtKB-UniRule"/>
</dbReference>
<dbReference type="GO" id="GO:0000287">
    <property type="term" value="F:magnesium ion binding"/>
    <property type="evidence" value="ECO:0007669"/>
    <property type="project" value="TreeGrafter"/>
</dbReference>
<dbReference type="GO" id="GO:0015940">
    <property type="term" value="P:pantothenate biosynthetic process"/>
    <property type="evidence" value="ECO:0007669"/>
    <property type="project" value="UniProtKB-UniRule"/>
</dbReference>
<dbReference type="CDD" id="cd06557">
    <property type="entry name" value="KPHMT-like"/>
    <property type="match status" value="1"/>
</dbReference>
<dbReference type="FunFam" id="3.20.20.60:FF:000003">
    <property type="entry name" value="3-methyl-2-oxobutanoate hydroxymethyltransferase"/>
    <property type="match status" value="1"/>
</dbReference>
<dbReference type="Gene3D" id="3.20.20.60">
    <property type="entry name" value="Phosphoenolpyruvate-binding domains"/>
    <property type="match status" value="1"/>
</dbReference>
<dbReference type="HAMAP" id="MF_00156">
    <property type="entry name" value="PanB"/>
    <property type="match status" value="1"/>
</dbReference>
<dbReference type="InterPro" id="IPR003700">
    <property type="entry name" value="Pantoate_hydroxy_MeTrfase"/>
</dbReference>
<dbReference type="InterPro" id="IPR015813">
    <property type="entry name" value="Pyrv/PenolPyrv_kinase-like_dom"/>
</dbReference>
<dbReference type="InterPro" id="IPR040442">
    <property type="entry name" value="Pyrv_kinase-like_dom_sf"/>
</dbReference>
<dbReference type="NCBIfam" id="TIGR00222">
    <property type="entry name" value="panB"/>
    <property type="match status" value="1"/>
</dbReference>
<dbReference type="NCBIfam" id="NF001452">
    <property type="entry name" value="PRK00311.1"/>
    <property type="match status" value="1"/>
</dbReference>
<dbReference type="PANTHER" id="PTHR20881">
    <property type="entry name" value="3-METHYL-2-OXOBUTANOATE HYDROXYMETHYLTRANSFERASE"/>
    <property type="match status" value="1"/>
</dbReference>
<dbReference type="PANTHER" id="PTHR20881:SF0">
    <property type="entry name" value="3-METHYL-2-OXOBUTANOATE HYDROXYMETHYLTRANSFERASE"/>
    <property type="match status" value="1"/>
</dbReference>
<dbReference type="Pfam" id="PF02548">
    <property type="entry name" value="Pantoate_transf"/>
    <property type="match status" value="1"/>
</dbReference>
<dbReference type="PIRSF" id="PIRSF000388">
    <property type="entry name" value="Pantoate_hydroxy_MeTrfase"/>
    <property type="match status" value="1"/>
</dbReference>
<dbReference type="SUPFAM" id="SSF51621">
    <property type="entry name" value="Phosphoenolpyruvate/pyruvate domain"/>
    <property type="match status" value="1"/>
</dbReference>